<name>RL36_BURCM</name>
<sequence>MKVMASVKRICRNCKIIKRKGVVRVICSSDPRHKQRQG</sequence>
<dbReference type="EMBL" id="CP000440">
    <property type="protein sequence ID" value="ABI85849.1"/>
    <property type="molecule type" value="Genomic_DNA"/>
</dbReference>
<dbReference type="RefSeq" id="WP_004199844.1">
    <property type="nucleotide sequence ID" value="NZ_CP009798.1"/>
</dbReference>
<dbReference type="SMR" id="Q0BJ24"/>
<dbReference type="GeneID" id="98107138"/>
<dbReference type="KEGG" id="bam:Bamb_0289"/>
<dbReference type="PATRIC" id="fig|339670.21.peg.1331"/>
<dbReference type="eggNOG" id="COG0257">
    <property type="taxonomic scope" value="Bacteria"/>
</dbReference>
<dbReference type="Proteomes" id="UP000000662">
    <property type="component" value="Chromosome 1"/>
</dbReference>
<dbReference type="GO" id="GO:0005737">
    <property type="term" value="C:cytoplasm"/>
    <property type="evidence" value="ECO:0007669"/>
    <property type="project" value="UniProtKB-ARBA"/>
</dbReference>
<dbReference type="GO" id="GO:1990904">
    <property type="term" value="C:ribonucleoprotein complex"/>
    <property type="evidence" value="ECO:0007669"/>
    <property type="project" value="UniProtKB-KW"/>
</dbReference>
<dbReference type="GO" id="GO:0005840">
    <property type="term" value="C:ribosome"/>
    <property type="evidence" value="ECO:0007669"/>
    <property type="project" value="UniProtKB-KW"/>
</dbReference>
<dbReference type="GO" id="GO:0003735">
    <property type="term" value="F:structural constituent of ribosome"/>
    <property type="evidence" value="ECO:0007669"/>
    <property type="project" value="InterPro"/>
</dbReference>
<dbReference type="GO" id="GO:0006412">
    <property type="term" value="P:translation"/>
    <property type="evidence" value="ECO:0007669"/>
    <property type="project" value="UniProtKB-UniRule"/>
</dbReference>
<dbReference type="HAMAP" id="MF_00251">
    <property type="entry name" value="Ribosomal_bL36"/>
    <property type="match status" value="1"/>
</dbReference>
<dbReference type="InterPro" id="IPR000473">
    <property type="entry name" value="Ribosomal_bL36"/>
</dbReference>
<dbReference type="InterPro" id="IPR035977">
    <property type="entry name" value="Ribosomal_bL36_sp"/>
</dbReference>
<dbReference type="NCBIfam" id="TIGR01022">
    <property type="entry name" value="rpmJ_bact"/>
    <property type="match status" value="1"/>
</dbReference>
<dbReference type="PANTHER" id="PTHR42888">
    <property type="entry name" value="50S RIBOSOMAL PROTEIN L36, CHLOROPLASTIC"/>
    <property type="match status" value="1"/>
</dbReference>
<dbReference type="PANTHER" id="PTHR42888:SF1">
    <property type="entry name" value="LARGE RIBOSOMAL SUBUNIT PROTEIN BL36C"/>
    <property type="match status" value="1"/>
</dbReference>
<dbReference type="Pfam" id="PF00444">
    <property type="entry name" value="Ribosomal_L36"/>
    <property type="match status" value="1"/>
</dbReference>
<dbReference type="SUPFAM" id="SSF57840">
    <property type="entry name" value="Ribosomal protein L36"/>
    <property type="match status" value="1"/>
</dbReference>
<dbReference type="PROSITE" id="PS00828">
    <property type="entry name" value="RIBOSOMAL_L36"/>
    <property type="match status" value="1"/>
</dbReference>
<protein>
    <recommendedName>
        <fullName evidence="1">Large ribosomal subunit protein bL36</fullName>
    </recommendedName>
    <alternativeName>
        <fullName evidence="2">50S ribosomal protein L36</fullName>
    </alternativeName>
</protein>
<comment type="similarity">
    <text evidence="1">Belongs to the bacterial ribosomal protein bL36 family.</text>
</comment>
<organism>
    <name type="scientific">Burkholderia ambifaria (strain ATCC BAA-244 / DSM 16087 / CCUG 44356 / LMG 19182 / AMMD)</name>
    <name type="common">Burkholderia cepacia (strain AMMD)</name>
    <dbReference type="NCBI Taxonomy" id="339670"/>
    <lineage>
        <taxon>Bacteria</taxon>
        <taxon>Pseudomonadati</taxon>
        <taxon>Pseudomonadota</taxon>
        <taxon>Betaproteobacteria</taxon>
        <taxon>Burkholderiales</taxon>
        <taxon>Burkholderiaceae</taxon>
        <taxon>Burkholderia</taxon>
        <taxon>Burkholderia cepacia complex</taxon>
    </lineage>
</organism>
<reference key="1">
    <citation type="submission" date="2006-08" db="EMBL/GenBank/DDBJ databases">
        <title>Complete sequence of chromosome 1 of Burkholderia cepacia AMMD.</title>
        <authorList>
            <person name="Copeland A."/>
            <person name="Lucas S."/>
            <person name="Lapidus A."/>
            <person name="Barry K."/>
            <person name="Detter J.C."/>
            <person name="Glavina del Rio T."/>
            <person name="Hammon N."/>
            <person name="Israni S."/>
            <person name="Pitluck S."/>
            <person name="Bruce D."/>
            <person name="Chain P."/>
            <person name="Malfatti S."/>
            <person name="Shin M."/>
            <person name="Vergez L."/>
            <person name="Schmutz J."/>
            <person name="Larimer F."/>
            <person name="Land M."/>
            <person name="Hauser L."/>
            <person name="Kyrpides N."/>
            <person name="Kim E."/>
            <person name="Parke J."/>
            <person name="Coenye T."/>
            <person name="Konstantinidis K."/>
            <person name="Ramette A."/>
            <person name="Tiedje J."/>
            <person name="Richardson P."/>
        </authorList>
    </citation>
    <scope>NUCLEOTIDE SEQUENCE [LARGE SCALE GENOMIC DNA]</scope>
    <source>
        <strain>ATCC BAA-244 / DSM 16087 / CCUG 44356 / LMG 19182 / AMMD</strain>
    </source>
</reference>
<keyword id="KW-0687">Ribonucleoprotein</keyword>
<keyword id="KW-0689">Ribosomal protein</keyword>
<evidence type="ECO:0000255" key="1">
    <source>
        <dbReference type="HAMAP-Rule" id="MF_00251"/>
    </source>
</evidence>
<evidence type="ECO:0000305" key="2"/>
<gene>
    <name evidence="1" type="primary">rpmJ</name>
    <name type="ordered locus">Bamb_0289</name>
</gene>
<feature type="chain" id="PRO_0000302171" description="Large ribosomal subunit protein bL36">
    <location>
        <begin position="1"/>
        <end position="38"/>
    </location>
</feature>
<accession>Q0BJ24</accession>
<proteinExistence type="inferred from homology"/>